<gene>
    <name type="ORF">L5</name>
</gene>
<organism>
    <name type="scientific">Human adenovirus C serotype 2</name>
    <name type="common">HAdV-2</name>
    <name type="synonym">Human adenovirus 2</name>
    <dbReference type="NCBI Taxonomy" id="10515"/>
    <lineage>
        <taxon>Viruses</taxon>
        <taxon>Varidnaviria</taxon>
        <taxon>Bamfordvirae</taxon>
        <taxon>Preplasmiviricota</taxon>
        <taxon>Tectiliviricetes</taxon>
        <taxon>Rowavirales</taxon>
        <taxon>Adenoviridae</taxon>
        <taxon>Mastadenovirus</taxon>
        <taxon>Human mastadenovirus C</taxon>
    </lineage>
</organism>
<keyword id="KW-0002">3D-structure</keyword>
<keyword id="KW-0167">Capsid protein</keyword>
<keyword id="KW-0903">Direct protein sequencing</keyword>
<keyword id="KW-0325">Glycoprotein</keyword>
<keyword id="KW-1048">Host nucleus</keyword>
<keyword id="KW-0945">Host-virus interaction</keyword>
<keyword id="KW-0426">Late protein</keyword>
<keyword id="KW-0597">Phosphoprotein</keyword>
<keyword id="KW-1185">Reference proteome</keyword>
<keyword id="KW-0677">Repeat</keyword>
<keyword id="KW-1233">Viral attachment to host adhesion receptor</keyword>
<keyword id="KW-1161">Viral attachment to host cell</keyword>
<keyword id="KW-0946">Virion</keyword>
<keyword id="KW-1160">Virus entry into host cell</keyword>
<proteinExistence type="evidence at protein level"/>
<sequence length="582" mass="61919">MKRARPSEDTFNPVYPYDTETGPPTVPFLTPPFVSPNGFQESPPGVLSLRVSEPLDTSHGMLALKMGSGLTLDKAGNLTSQNVTTVTQPLKKTKSNISLDTSAPLTITSGALTVATTAPLIVTSGALSVQSQAPLTVQDSKLSIATKGPITVSDGKLALQTSAPLSGSDSDTLTVTASPPLTTATGSLGINMEDPIYVNNGKIGIKISGPLQVAQNSDTLTVVTGPGVTVEQNSLRTKVAGAIGYDSSNNMEIKTGGGMRINNNLLILDVDYPFDAQTKLRLKLGQGPLYINASHNLDINYNRGLYLFNASNNTKKLEVSIKKSSGLNFDNTAIAINAGKGLEFDTNTSESPDINPIKTKIGSGIDYNENGAMITKLGAGLSFDNSGAITIGNKNDDKLTLWTTPDPSPNCRIHSDNDCKFTLVLTKCGSQVLATVAALAVSGDLSSMTGTVASVSIFLRFDQNGVLMENSSLKKHYWNFRNGNSTNANPYTNAVGFMPNLLAYPKTQSQTAKNNIVSQVYLHGDKTKPMILTITLNGTSESTETSEVSTYSMSFTWSWESGKYTTETFATNSYTFSYIAQE</sequence>
<name>SPIKE_ADE02</name>
<comment type="function">
    <text evidence="3 4 6 8">Forms spikes that protrude from each vertex of the icosahedral capsid. Interacts with host coxsackievirus and adenovirus receptor CXADR located at the cell tight junctions to provide virion initial attachment to target cell. The fiber protein binds to CXADR with a higher affinity than CXADR binds to itself, thereby blocking the cell-cell adhesion function of CXADR dimers and leading to local disruption of the tight junction. Fiber protein present on neo-synthesized particles may thus disrupt the junctional integrity in order to facilitate further neighboring cells infection. Fiber proteins are shed during virus entry, when virus is still at the cell surface. Fiber shedding is dependent on viral CXADR drifting motion and subsequent binding to immobile integrins. Heparan sulfate might also play a role in virus binding.</text>
</comment>
<comment type="subunit">
    <text evidence="10 11">Homotrimer; arranged in a triple beta-spiral. Interacts with host receptor CXADR. Interacts (via N-terminal tail region) with pentons (Probable).</text>
</comment>
<comment type="subcellular location">
    <subcellularLocation>
        <location evidence="2">Virion</location>
    </subcellularLocation>
    <subcellularLocation>
        <location evidence="10">Host nucleus</location>
    </subcellularLocation>
    <text>Anchored to the pentons, protrudes from the virion surface. Present in 36 copies per virion.</text>
</comment>
<comment type="induction">
    <text>Expressed in the late phase of the viral replicative cycle.</text>
</comment>
<comment type="domain">
    <text>The tail region anchors the fiber to penton base capsomers, whereas the shaft, built from several repeated motifs, allows the knob to protrude from the virion.</text>
</comment>
<comment type="PTM">
    <text evidence="5">O-glycosylated; glycans contain N-acetylglucosamine and may play a role in fiber assembly and stabilization.</text>
</comment>
<comment type="miscellaneous">
    <text>All late proteins expressed from the major late promoter are produced by alternative splicing and alternative polyadenylation of the same gene giving rise to non-overlapping ORFs. A leader sequence is present in the N-terminus of all these mRNAs and is recognized by the viral shutoff protein to provide expression although conventional translation via ribosome scanning from the cap has been shut off in the host cell.</text>
</comment>
<comment type="similarity">
    <text evidence="9">Belongs to the adenoviridae fiber family.</text>
</comment>
<reference key="1">
    <citation type="journal article" date="1981" name="Nucleic Acids Res.">
        <title>Nucleotide sequence of the EcoRI E fragment of adenovirus 2 genome.</title>
        <authorList>
            <person name="Herisse J."/>
            <person name="Galibert F."/>
        </authorList>
    </citation>
    <scope>NUCLEOTIDE SEQUENCE [GENOMIC DNA] OF 1-411</scope>
</reference>
<reference key="2">
    <citation type="journal article" date="2012" name="Virology">
        <title>The phosphoproteome of the adenovirus type 2 virion.</title>
        <authorList>
            <person name="Bergstrom Lind S."/>
            <person name="Artemenko K.A."/>
            <person name="Elfineh L."/>
            <person name="Zhao Y."/>
            <person name="Bergquist J."/>
            <person name="Pettersson U."/>
        </authorList>
    </citation>
    <scope>PROTEIN SEQUENCE OF 324-358</scope>
    <scope>PHOSPHORYLATION AT SER-325 AND SER-351</scope>
</reference>
<reference key="3">
    <citation type="journal article" date="1981" name="Nucleic Acids Res.">
        <title>Nucleotide sequence of adenovirus 2 DNA fragment encoding for the carboxylic region of the fiber protein and the entire E4 region.</title>
        <authorList>
            <person name="Herisse J."/>
            <person name="Rigolet M."/>
            <person name="Dupont de Dinechin S."/>
            <person name="Galibert F."/>
        </authorList>
    </citation>
    <scope>NUCLEOTIDE SEQUENCE [GENOMIC DNA] OF 382-582</scope>
</reference>
<reference key="4">
    <citation type="journal article" date="1990" name="J. Virol.">
        <title>Relative accessibility of N-acetylglucosamine in trimers of the adenovirus types 2 and 5 fiber proteins.</title>
        <authorList>
            <person name="Mullis K.G."/>
            <person name="Haltiwanger R.S."/>
            <person name="Hart G.W."/>
            <person name="Marchase R.B."/>
            <person name="Engler J.A."/>
        </authorList>
    </citation>
    <scope>GLYCOSYLATION</scope>
    <source>
        <strain>Human adenovirus C serotype 5</strain>
    </source>
</reference>
<reference key="5">
    <citation type="journal article" date="1998" name="J. Virol.">
        <title>Adenovirus internalization and infection require dynamin.</title>
        <authorList>
            <person name="Wang K."/>
            <person name="Huang S."/>
            <person name="Kapoor-Munshi A."/>
            <person name="Nemerow G."/>
        </authorList>
    </citation>
    <scope>FUNCTION</scope>
</reference>
<reference key="6">
    <citation type="journal article" date="1998" name="J. Virol.">
        <title>The coxsackievirus-adenovirus receptor protein can function as a cellular attachment protein for adenovirus serotypes from subgroups A, C, D, E, and F.</title>
        <authorList>
            <person name="Roelvink P.W."/>
            <person name="Lizonova A."/>
            <person name="Lee J.G.M."/>
            <person name="Li Y."/>
            <person name="Bergelson J.M."/>
            <person name="Finberg R.W."/>
            <person name="Brough D.E."/>
            <person name="Kovesdi I."/>
            <person name="Wickham T.J."/>
        </authorList>
    </citation>
    <scope>INTERACTION WITH HUMAN CXADR</scope>
</reference>
<reference key="7">
    <citation type="journal article" date="2000" name="Virology">
        <title>Heparan sulfate glycosaminoglycans are involved in adenovirus type 5 and 2-host cell interactions.</title>
        <authorList>
            <person name="Dechecchi M.C."/>
            <person name="Tamanini A."/>
            <person name="Bonizzato A."/>
            <person name="Cabrini G."/>
        </authorList>
    </citation>
    <scope>FUNCTION</scope>
</reference>
<reference key="8">
    <citation type="journal article" date="2002" name="Cell">
        <title>Adenovirus fiber disrupts CAR-mediated intercellular adhesion allowing virus escape.</title>
        <authorList>
            <person name="Walters R.W."/>
            <person name="Freimuth P."/>
            <person name="Moninger T.O."/>
            <person name="Ganske I."/>
            <person name="Zabner J."/>
            <person name="Welsh M.J."/>
        </authorList>
    </citation>
    <scope>FUNCTION</scope>
</reference>
<reference key="9">
    <citation type="journal article" date="2004" name="J. Gene Med.">
        <title>Adenovirus endocytosis.</title>
        <authorList>
            <person name="Meier O."/>
            <person name="Greber U.F."/>
        </authorList>
    </citation>
    <scope>REVIEW</scope>
</reference>
<reference key="10">
    <citation type="journal article" date="2011" name="Cell Host Microbe">
        <title>Drifting motions of the adenovirus receptor CAR and immobile integrins initiate virus uncoating and membrane lytic protein exposure.</title>
        <authorList>
            <person name="Burckhardt C.J."/>
            <person name="Suomalainen M."/>
            <person name="Schoenenberger P."/>
            <person name="Boucke K."/>
            <person name="Hemmi S."/>
            <person name="Greber U.F."/>
        </authorList>
    </citation>
    <scope>FUNCTION</scope>
</reference>
<reference key="11">
    <citation type="journal article" date="2012" name="Viruses">
        <title>Latest insights on adenovirus structure and assembly.</title>
        <authorList>
            <person name="San Martin C."/>
        </authorList>
    </citation>
    <scope>REVIEW</scope>
</reference>
<reference key="12">
    <citation type="journal article" date="1999" name="Nature">
        <title>A triple beta-spiral in the adenovirus fibre shaft reveals a new structural motif for a fibrous protein.</title>
        <authorList>
            <person name="van Raaij M.J."/>
            <person name="Mitraki A."/>
            <person name="Lavigne G."/>
            <person name="Cusack S."/>
        </authorList>
    </citation>
    <scope>X-RAY CRYSTALLOGRAPHY (2.4 ANGSTROMS) OF 319-582</scope>
    <scope>INTERACTION WITH PENTON PROTEIN</scope>
    <scope>SUBCELLULAR LOCATION</scope>
</reference>
<reference key="13">
    <citation type="journal article" date="1999" name="Virology">
        <title>Structure of the human adenovirus serotype 2 fiber head domain at 1.5 A resolution.</title>
        <authorList>
            <person name="van Raaij M.J."/>
            <person name="Louis N."/>
            <person name="Chroboczek J."/>
            <person name="Cusack S."/>
        </authorList>
    </citation>
    <scope>X-RAY CRYSTALLOGRAPHY (1.5 ANGSTROMS) OF 388-582</scope>
</reference>
<dbReference type="EMBL" id="J01917">
    <property type="protein sequence ID" value="AAA92223.1"/>
    <property type="molecule type" value="Genomic_DNA"/>
</dbReference>
<dbReference type="PIR" id="A93722">
    <property type="entry name" value="ERADF2"/>
</dbReference>
<dbReference type="RefSeq" id="AP_000190.1">
    <property type="nucleotide sequence ID" value="AC_000007.1"/>
</dbReference>
<dbReference type="RefSeq" id="NP_040533.1">
    <property type="nucleotide sequence ID" value="NC_001405.1"/>
</dbReference>
<dbReference type="PDB" id="1QHV">
    <property type="method" value="X-ray"/>
    <property type="resolution" value="1.51 A"/>
    <property type="chains" value="A=388-582"/>
</dbReference>
<dbReference type="PDB" id="1QIU">
    <property type="method" value="X-ray"/>
    <property type="resolution" value="2.40 A"/>
    <property type="chains" value="A/B/C/D/E/F=319-582"/>
</dbReference>
<dbReference type="PDB" id="1V1H">
    <property type="method" value="X-ray"/>
    <property type="resolution" value="1.90 A"/>
    <property type="chains" value="A/B/C/D/E/F=319-392"/>
</dbReference>
<dbReference type="PDB" id="1V1I">
    <property type="method" value="X-ray"/>
    <property type="resolution" value="1.90 A"/>
    <property type="chains" value="A/B/C=319-398"/>
</dbReference>
<dbReference type="PDB" id="1X9T">
    <property type="method" value="X-ray"/>
    <property type="resolution" value="3.50 A"/>
    <property type="chains" value="B=1-20"/>
</dbReference>
<dbReference type="PDB" id="2C9F">
    <property type="method" value="EM"/>
    <property type="resolution" value="16.50 A"/>
    <property type="chains" value="S/T/U/V/W=1-19"/>
</dbReference>
<dbReference type="PDB" id="4AR2">
    <property type="method" value="X-ray"/>
    <property type="resolution" value="3.80 A"/>
    <property type="chains" value="P=1-20"/>
</dbReference>
<dbReference type="PDB" id="4V4U">
    <property type="method" value="EM"/>
    <property type="resolution" value="10.00 A"/>
    <property type="chains" value="S/T/U/V/W=10-19"/>
</dbReference>
<dbReference type="PDBsum" id="1QHV"/>
<dbReference type="PDBsum" id="1QIU"/>
<dbReference type="PDBsum" id="1V1H"/>
<dbReference type="PDBsum" id="1V1I"/>
<dbReference type="PDBsum" id="1X9T"/>
<dbReference type="PDBsum" id="2C9F"/>
<dbReference type="PDBsum" id="4AR2"/>
<dbReference type="PDBsum" id="4V4U"/>
<dbReference type="SMR" id="P03275"/>
<dbReference type="iPTMnet" id="P03275"/>
<dbReference type="GeneID" id="2652999"/>
<dbReference type="KEGG" id="vg:2652999"/>
<dbReference type="EvolutionaryTrace" id="P03275"/>
<dbReference type="Proteomes" id="UP000008167">
    <property type="component" value="Segment"/>
</dbReference>
<dbReference type="GO" id="GO:0042025">
    <property type="term" value="C:host cell nucleus"/>
    <property type="evidence" value="ECO:0007669"/>
    <property type="project" value="UniProtKB-SubCell"/>
</dbReference>
<dbReference type="GO" id="GO:0019028">
    <property type="term" value="C:viral capsid"/>
    <property type="evidence" value="ECO:0007669"/>
    <property type="project" value="UniProtKB-KW"/>
</dbReference>
<dbReference type="GO" id="GO:0098671">
    <property type="term" value="P:adhesion receptor-mediated virion attachment to host cell"/>
    <property type="evidence" value="ECO:0007669"/>
    <property type="project" value="UniProtKB-KW"/>
</dbReference>
<dbReference type="GO" id="GO:0007155">
    <property type="term" value="P:cell adhesion"/>
    <property type="evidence" value="ECO:0007669"/>
    <property type="project" value="InterPro"/>
</dbReference>
<dbReference type="GO" id="GO:0046718">
    <property type="term" value="P:symbiont entry into host cell"/>
    <property type="evidence" value="ECO:0007669"/>
    <property type="project" value="UniProtKB-KW"/>
</dbReference>
<dbReference type="Gene3D" id="6.20.10.20">
    <property type="match status" value="1"/>
</dbReference>
<dbReference type="Gene3D" id="2.60.90.10">
    <property type="entry name" value="Adenovirus pIV-related, attachment domain"/>
    <property type="match status" value="1"/>
</dbReference>
<dbReference type="Gene3D" id="2.10.25.20">
    <property type="entry name" value="reovirus attachment protein sigma1, domain 1"/>
    <property type="match status" value="1"/>
</dbReference>
<dbReference type="InterPro" id="IPR000931">
    <property type="entry name" value="Adeno_fibre"/>
</dbReference>
<dbReference type="InterPro" id="IPR000978">
    <property type="entry name" value="Adeno_fibre_knob"/>
</dbReference>
<dbReference type="InterPro" id="IPR000939">
    <property type="entry name" value="Adenobir_fibre_prot_rpt/shaft"/>
</dbReference>
<dbReference type="InterPro" id="IPR008982">
    <property type="entry name" value="Adenovirus_pIV-like_att"/>
</dbReference>
<dbReference type="InterPro" id="IPR009013">
    <property type="entry name" value="Attachment_protein_shaft_sf"/>
</dbReference>
<dbReference type="Pfam" id="PF00541">
    <property type="entry name" value="Adeno_knob"/>
    <property type="match status" value="1"/>
</dbReference>
<dbReference type="Pfam" id="PF00608">
    <property type="entry name" value="Adeno_shaft"/>
    <property type="match status" value="5"/>
</dbReference>
<dbReference type="PRINTS" id="PR00307">
    <property type="entry name" value="ADENOVSFIBRE"/>
</dbReference>
<dbReference type="SUPFAM" id="SSF51225">
    <property type="entry name" value="Fibre shaft of virus attachment proteins"/>
    <property type="match status" value="3"/>
</dbReference>
<dbReference type="SUPFAM" id="SSF49835">
    <property type="entry name" value="Virus attachment protein globular domain"/>
    <property type="match status" value="1"/>
</dbReference>
<accession>P03275</accession>
<protein>
    <recommendedName>
        <fullName>Fiber protein</fullName>
        <shortName>SPIKE</shortName>
    </recommendedName>
    <alternativeName>
        <fullName>Protein IV</fullName>
    </alternativeName>
</protein>
<feature type="chain" id="PRO_0000221786" description="Fiber protein">
    <location>
        <begin position="1"/>
        <end position="582"/>
    </location>
</feature>
<feature type="repeat" description="Shaft 1">
    <location>
        <begin position="45"/>
        <end position="59"/>
    </location>
</feature>
<feature type="repeat" description="Shaft 2">
    <location>
        <begin position="60"/>
        <end position="75"/>
    </location>
</feature>
<feature type="repeat" description="Shaft 3">
    <location>
        <begin position="76"/>
        <end position="95"/>
    </location>
</feature>
<feature type="repeat" description="Shaft 4">
    <location>
        <begin position="96"/>
        <end position="109"/>
    </location>
</feature>
<feature type="repeat" description="Shaft 5">
    <location>
        <begin position="110"/>
        <end position="124"/>
    </location>
</feature>
<feature type="repeat" description="Shaft 6">
    <location>
        <begin position="125"/>
        <end position="139"/>
    </location>
</feature>
<feature type="repeat" description="Shaft 7">
    <location>
        <begin position="140"/>
        <end position="154"/>
    </location>
</feature>
<feature type="repeat" description="Shaft 8">
    <location>
        <begin position="155"/>
        <end position="170"/>
    </location>
</feature>
<feature type="repeat" description="Shaft 9">
    <location>
        <begin position="171"/>
        <end position="185"/>
    </location>
</feature>
<feature type="repeat" description="Shaft 10">
    <location>
        <begin position="186"/>
        <end position="200"/>
    </location>
</feature>
<feature type="repeat" description="Shaft 11">
    <location>
        <begin position="201"/>
        <end position="217"/>
    </location>
</feature>
<feature type="repeat" description="Shaft 12">
    <location>
        <begin position="218"/>
        <end position="232"/>
    </location>
</feature>
<feature type="repeat" description="Shaft 13">
    <location>
        <begin position="233"/>
        <end position="248"/>
    </location>
</feature>
<feature type="repeat" description="Shaft 14">
    <location>
        <begin position="249"/>
        <end position="263"/>
    </location>
</feature>
<feature type="repeat" description="Shaft 15">
    <location>
        <begin position="264"/>
        <end position="277"/>
    </location>
</feature>
<feature type="repeat" description="Shaft 16">
    <location>
        <begin position="278"/>
        <end position="294"/>
    </location>
</feature>
<feature type="repeat" description="Shaft 17">
    <location>
        <begin position="295"/>
        <end position="314"/>
    </location>
</feature>
<feature type="repeat" description="Shaft 18">
    <location>
        <begin position="315"/>
        <end position="331"/>
    </location>
</feature>
<feature type="repeat" description="Shaft 19">
    <location>
        <begin position="332"/>
        <end position="354"/>
    </location>
</feature>
<feature type="repeat" description="Shaft 20">
    <location>
        <begin position="355"/>
        <end position="370"/>
    </location>
</feature>
<feature type="repeat" description="Shaft 21">
    <location>
        <begin position="371"/>
        <end position="386"/>
    </location>
</feature>
<feature type="repeat" description="Shaft 22">
    <location>
        <begin position="387"/>
        <end position="392"/>
    </location>
</feature>
<feature type="region of interest" description="Tail (penton base attachment)">
    <location>
        <begin position="1"/>
        <end position="44"/>
    </location>
</feature>
<feature type="region of interest" description="Disordered" evidence="1">
    <location>
        <begin position="1"/>
        <end position="23"/>
    </location>
</feature>
<feature type="region of interest" description="Shaft region">
    <location>
        <begin position="45"/>
        <end position="392"/>
    </location>
</feature>
<feature type="region of interest" description="Spacer">
    <location>
        <begin position="393"/>
        <end position="398"/>
    </location>
</feature>
<feature type="region of interest" description="Head">
    <location>
        <begin position="399"/>
        <end position="582"/>
    </location>
</feature>
<feature type="modified residue" description="Phosphoserine; by host" evidence="7">
    <location>
        <position position="325"/>
    </location>
</feature>
<feature type="modified residue" description="Phosphoserine; by host" evidence="7">
    <location>
        <position position="351"/>
    </location>
</feature>
<feature type="helix" evidence="14">
    <location>
        <begin position="323"/>
        <end position="325"/>
    </location>
</feature>
<feature type="strand" evidence="14">
    <location>
        <begin position="327"/>
        <end position="330"/>
    </location>
</feature>
<feature type="strand" evidence="14">
    <location>
        <begin position="333"/>
        <end position="336"/>
    </location>
</feature>
<feature type="strand" evidence="14">
    <location>
        <begin position="342"/>
        <end position="344"/>
    </location>
</feature>
<feature type="turn" evidence="14">
    <location>
        <begin position="349"/>
        <end position="353"/>
    </location>
</feature>
<feature type="strand" evidence="14">
    <location>
        <begin position="357"/>
        <end position="359"/>
    </location>
</feature>
<feature type="strand" evidence="14">
    <location>
        <begin position="365"/>
        <end position="367"/>
    </location>
</feature>
<feature type="strand" evidence="14">
    <location>
        <begin position="373"/>
        <end position="375"/>
    </location>
</feature>
<feature type="strand" evidence="15">
    <location>
        <begin position="381"/>
        <end position="383"/>
    </location>
</feature>
<feature type="turn" evidence="13">
    <location>
        <begin position="385"/>
        <end position="387"/>
    </location>
</feature>
<feature type="strand" evidence="14">
    <location>
        <begin position="389"/>
        <end position="391"/>
    </location>
</feature>
<feature type="helix" evidence="12">
    <location>
        <begin position="397"/>
        <end position="399"/>
    </location>
</feature>
<feature type="strand" evidence="12">
    <location>
        <begin position="400"/>
        <end position="403"/>
    </location>
</feature>
<feature type="strand" evidence="12">
    <location>
        <begin position="413"/>
        <end position="415"/>
    </location>
</feature>
<feature type="strand" evidence="12">
    <location>
        <begin position="419"/>
        <end position="428"/>
    </location>
</feature>
<feature type="strand" evidence="12">
    <location>
        <begin position="431"/>
        <end position="440"/>
    </location>
</feature>
<feature type="helix" evidence="12">
    <location>
        <begin position="446"/>
        <end position="448"/>
    </location>
</feature>
<feature type="strand" evidence="12">
    <location>
        <begin position="450"/>
        <end position="461"/>
    </location>
</feature>
<feature type="strand" evidence="12">
    <location>
        <begin position="469"/>
        <end position="473"/>
    </location>
</feature>
<feature type="strand" evidence="12">
    <location>
        <begin position="479"/>
        <end position="482"/>
    </location>
</feature>
<feature type="helix" evidence="12">
    <location>
        <begin position="495"/>
        <end position="497"/>
    </location>
</feature>
<feature type="turn" evidence="12">
    <location>
        <begin position="501"/>
        <end position="503"/>
    </location>
</feature>
<feature type="helix" evidence="12">
    <location>
        <begin position="512"/>
        <end position="514"/>
    </location>
</feature>
<feature type="strand" evidence="12">
    <location>
        <begin position="515"/>
        <end position="521"/>
    </location>
</feature>
<feature type="helix" evidence="12">
    <location>
        <begin position="522"/>
        <end position="524"/>
    </location>
</feature>
<feature type="strand" evidence="12">
    <location>
        <begin position="528"/>
        <end position="537"/>
    </location>
</feature>
<feature type="helix" evidence="12">
    <location>
        <begin position="538"/>
        <end position="540"/>
    </location>
</feature>
<feature type="strand" evidence="12">
    <location>
        <begin position="550"/>
        <end position="558"/>
    </location>
</feature>
<feature type="strand" evidence="12">
    <location>
        <begin position="574"/>
        <end position="580"/>
    </location>
</feature>
<organismHost>
    <name type="scientific">Homo sapiens</name>
    <name type="common">Human</name>
    <dbReference type="NCBI Taxonomy" id="9606"/>
</organismHost>
<evidence type="ECO:0000256" key="1">
    <source>
        <dbReference type="SAM" id="MobiDB-lite"/>
    </source>
</evidence>
<evidence type="ECO:0000269" key="2">
    <source>
    </source>
</evidence>
<evidence type="ECO:0000269" key="3">
    <source>
    </source>
</evidence>
<evidence type="ECO:0000269" key="4">
    <source>
    </source>
</evidence>
<evidence type="ECO:0000269" key="5">
    <source>
    </source>
</evidence>
<evidence type="ECO:0000269" key="6">
    <source>
    </source>
</evidence>
<evidence type="ECO:0000269" key="7">
    <source>
    </source>
</evidence>
<evidence type="ECO:0000269" key="8">
    <source>
    </source>
</evidence>
<evidence type="ECO:0000305" key="9"/>
<evidence type="ECO:0000305" key="10">
    <source>
    </source>
</evidence>
<evidence type="ECO:0000305" key="11">
    <source>
    </source>
</evidence>
<evidence type="ECO:0007829" key="12">
    <source>
        <dbReference type="PDB" id="1QHV"/>
    </source>
</evidence>
<evidence type="ECO:0007829" key="13">
    <source>
        <dbReference type="PDB" id="1QIU"/>
    </source>
</evidence>
<evidence type="ECO:0007829" key="14">
    <source>
        <dbReference type="PDB" id="1V1H"/>
    </source>
</evidence>
<evidence type="ECO:0007829" key="15">
    <source>
        <dbReference type="PDB" id="1V1I"/>
    </source>
</evidence>